<sequence length="473" mass="52327">MHSLTTHKHVRGGDMTIRTRFAPSPTGLLHVGGARTALFNYLFARHHGGEYLLRIEDTDRARSTPEAVQVILDGLDWLGLSPDQEPVFQSTRETRHTEVAHSLLERGMAYRCFLSPEELQAQRDQAAADKRPLRINSPWRDRDLSEAPSGIAPVIRLRVPQEGETVVDDLVQGPVRVANAELDDMIILRSDGTPTYLHAVVVDDHDMAITHVIRGDDHLTNTFRQVQIFKALGWDLPRFAHIPLIHGADGAKLSKRHGAVSVLEFEREGFLPEALCNYLLRLGWGHGDAEILSRDEQVALFDLDGVGRAASRMDYAKLTHLNGVYLREADDQRLTTDLCRRLDLSPDSDASSRIRRLMPKLKERARTLVDLAESARFVIERPSGPKDAKAAALLSDEARGWLRALLPQLQATDFSAAAVDQALRAFAEEHGLKLGQIAQPLRVALTGGTTSPPIDATLEALGASEVTSRIEAV</sequence>
<comment type="function">
    <text evidence="1">Catalyzes the attachment of glutamate to tRNA(Glu) in a two-step reaction: glutamate is first activated by ATP to form Glu-AMP and then transferred to the acceptor end of tRNA(Glu).</text>
</comment>
<comment type="catalytic activity">
    <reaction evidence="1">
        <text>tRNA(Glu) + L-glutamate + ATP = L-glutamyl-tRNA(Glu) + AMP + diphosphate</text>
        <dbReference type="Rhea" id="RHEA:23540"/>
        <dbReference type="Rhea" id="RHEA-COMP:9663"/>
        <dbReference type="Rhea" id="RHEA-COMP:9680"/>
        <dbReference type="ChEBI" id="CHEBI:29985"/>
        <dbReference type="ChEBI" id="CHEBI:30616"/>
        <dbReference type="ChEBI" id="CHEBI:33019"/>
        <dbReference type="ChEBI" id="CHEBI:78442"/>
        <dbReference type="ChEBI" id="CHEBI:78520"/>
        <dbReference type="ChEBI" id="CHEBI:456215"/>
        <dbReference type="EC" id="6.1.1.17"/>
    </reaction>
</comment>
<comment type="subunit">
    <text evidence="1">Monomer.</text>
</comment>
<comment type="subcellular location">
    <subcellularLocation>
        <location evidence="1">Cytoplasm</location>
    </subcellularLocation>
</comment>
<comment type="similarity">
    <text evidence="1">Belongs to the class-I aminoacyl-tRNA synthetase family. Glutamate--tRNA ligase type 1 subfamily.</text>
</comment>
<accession>Q0BTZ0</accession>
<keyword id="KW-0030">Aminoacyl-tRNA synthetase</keyword>
<keyword id="KW-0067">ATP-binding</keyword>
<keyword id="KW-0963">Cytoplasm</keyword>
<keyword id="KW-0436">Ligase</keyword>
<keyword id="KW-0547">Nucleotide-binding</keyword>
<keyword id="KW-0648">Protein biosynthesis</keyword>
<keyword id="KW-1185">Reference proteome</keyword>
<protein>
    <recommendedName>
        <fullName evidence="1">Glutamate--tRNA ligase 1</fullName>
        <ecNumber evidence="1">6.1.1.17</ecNumber>
    </recommendedName>
    <alternativeName>
        <fullName evidence="1">Glutamyl-tRNA synthetase 1</fullName>
        <shortName evidence="1">GluRS 1</shortName>
    </alternativeName>
</protein>
<feature type="chain" id="PRO_0000330973" description="Glutamate--tRNA ligase 1">
    <location>
        <begin position="1"/>
        <end position="473"/>
    </location>
</feature>
<feature type="short sequence motif" description="'HIGH' region" evidence="1">
    <location>
        <begin position="23"/>
        <end position="33"/>
    </location>
</feature>
<feature type="short sequence motif" description="'KMSKS' region" evidence="1">
    <location>
        <begin position="252"/>
        <end position="256"/>
    </location>
</feature>
<feature type="binding site" evidence="1">
    <location>
        <position position="255"/>
    </location>
    <ligand>
        <name>ATP</name>
        <dbReference type="ChEBI" id="CHEBI:30616"/>
    </ligand>
</feature>
<gene>
    <name evidence="1" type="primary">gltX1</name>
    <name type="ordered locus">GbCGDNIH1_0814</name>
</gene>
<dbReference type="EC" id="6.1.1.17" evidence="1"/>
<dbReference type="EMBL" id="CP000394">
    <property type="protein sequence ID" value="ABI61712.1"/>
    <property type="molecule type" value="Genomic_DNA"/>
</dbReference>
<dbReference type="SMR" id="Q0BTZ0"/>
<dbReference type="STRING" id="391165.GbCGDNIH1_0814"/>
<dbReference type="KEGG" id="gbe:GbCGDNIH1_0814"/>
<dbReference type="eggNOG" id="COG0008">
    <property type="taxonomic scope" value="Bacteria"/>
</dbReference>
<dbReference type="eggNOG" id="COG1384">
    <property type="taxonomic scope" value="Bacteria"/>
</dbReference>
<dbReference type="HOGENOM" id="CLU_015768_6_0_5"/>
<dbReference type="Proteomes" id="UP000001963">
    <property type="component" value="Chromosome"/>
</dbReference>
<dbReference type="GO" id="GO:0005829">
    <property type="term" value="C:cytosol"/>
    <property type="evidence" value="ECO:0007669"/>
    <property type="project" value="TreeGrafter"/>
</dbReference>
<dbReference type="GO" id="GO:0005524">
    <property type="term" value="F:ATP binding"/>
    <property type="evidence" value="ECO:0007669"/>
    <property type="project" value="UniProtKB-UniRule"/>
</dbReference>
<dbReference type="GO" id="GO:0004818">
    <property type="term" value="F:glutamate-tRNA ligase activity"/>
    <property type="evidence" value="ECO:0007669"/>
    <property type="project" value="UniProtKB-UniRule"/>
</dbReference>
<dbReference type="GO" id="GO:0000049">
    <property type="term" value="F:tRNA binding"/>
    <property type="evidence" value="ECO:0007669"/>
    <property type="project" value="InterPro"/>
</dbReference>
<dbReference type="GO" id="GO:0008270">
    <property type="term" value="F:zinc ion binding"/>
    <property type="evidence" value="ECO:0007669"/>
    <property type="project" value="InterPro"/>
</dbReference>
<dbReference type="GO" id="GO:0006424">
    <property type="term" value="P:glutamyl-tRNA aminoacylation"/>
    <property type="evidence" value="ECO:0007669"/>
    <property type="project" value="UniProtKB-UniRule"/>
</dbReference>
<dbReference type="CDD" id="cd00808">
    <property type="entry name" value="GluRS_core"/>
    <property type="match status" value="1"/>
</dbReference>
<dbReference type="FunFam" id="3.40.50.620:FF:000007">
    <property type="entry name" value="Glutamate--tRNA ligase"/>
    <property type="match status" value="1"/>
</dbReference>
<dbReference type="Gene3D" id="1.10.10.350">
    <property type="match status" value="1"/>
</dbReference>
<dbReference type="Gene3D" id="3.40.50.620">
    <property type="entry name" value="HUPs"/>
    <property type="match status" value="1"/>
</dbReference>
<dbReference type="HAMAP" id="MF_00022">
    <property type="entry name" value="Glu_tRNA_synth_type1"/>
    <property type="match status" value="1"/>
</dbReference>
<dbReference type="InterPro" id="IPR045462">
    <property type="entry name" value="aa-tRNA-synth_I_cd-bd"/>
</dbReference>
<dbReference type="InterPro" id="IPR020751">
    <property type="entry name" value="aa-tRNA-synth_I_codon-bd_sub2"/>
</dbReference>
<dbReference type="InterPro" id="IPR001412">
    <property type="entry name" value="aa-tRNA-synth_I_CS"/>
</dbReference>
<dbReference type="InterPro" id="IPR008925">
    <property type="entry name" value="aa_tRNA-synth_I_cd-bd_sf"/>
</dbReference>
<dbReference type="InterPro" id="IPR004527">
    <property type="entry name" value="Glu-tRNA-ligase_bac/mito"/>
</dbReference>
<dbReference type="InterPro" id="IPR000924">
    <property type="entry name" value="Glu/Gln-tRNA-synth"/>
</dbReference>
<dbReference type="InterPro" id="IPR020058">
    <property type="entry name" value="Glu/Gln-tRNA-synth_Ib_cat-dom"/>
</dbReference>
<dbReference type="InterPro" id="IPR049940">
    <property type="entry name" value="GluQ/Sye"/>
</dbReference>
<dbReference type="InterPro" id="IPR033910">
    <property type="entry name" value="GluRS_core"/>
</dbReference>
<dbReference type="InterPro" id="IPR014729">
    <property type="entry name" value="Rossmann-like_a/b/a_fold"/>
</dbReference>
<dbReference type="NCBIfam" id="TIGR00464">
    <property type="entry name" value="gltX_bact"/>
    <property type="match status" value="1"/>
</dbReference>
<dbReference type="PANTHER" id="PTHR43311">
    <property type="entry name" value="GLUTAMATE--TRNA LIGASE"/>
    <property type="match status" value="1"/>
</dbReference>
<dbReference type="PANTHER" id="PTHR43311:SF2">
    <property type="entry name" value="GLUTAMATE--TRNA LIGASE, MITOCHONDRIAL-RELATED"/>
    <property type="match status" value="1"/>
</dbReference>
<dbReference type="Pfam" id="PF19269">
    <property type="entry name" value="Anticodon_2"/>
    <property type="match status" value="1"/>
</dbReference>
<dbReference type="Pfam" id="PF00749">
    <property type="entry name" value="tRNA-synt_1c"/>
    <property type="match status" value="1"/>
</dbReference>
<dbReference type="PRINTS" id="PR00987">
    <property type="entry name" value="TRNASYNTHGLU"/>
</dbReference>
<dbReference type="SUPFAM" id="SSF48163">
    <property type="entry name" value="An anticodon-binding domain of class I aminoacyl-tRNA synthetases"/>
    <property type="match status" value="1"/>
</dbReference>
<dbReference type="SUPFAM" id="SSF52374">
    <property type="entry name" value="Nucleotidylyl transferase"/>
    <property type="match status" value="1"/>
</dbReference>
<dbReference type="PROSITE" id="PS00178">
    <property type="entry name" value="AA_TRNA_LIGASE_I"/>
    <property type="match status" value="1"/>
</dbReference>
<name>SYE1_GRABC</name>
<evidence type="ECO:0000255" key="1">
    <source>
        <dbReference type="HAMAP-Rule" id="MF_00022"/>
    </source>
</evidence>
<proteinExistence type="inferred from homology"/>
<organism>
    <name type="scientific">Granulibacter bethesdensis (strain ATCC BAA-1260 / CGDNIH1)</name>
    <dbReference type="NCBI Taxonomy" id="391165"/>
    <lineage>
        <taxon>Bacteria</taxon>
        <taxon>Pseudomonadati</taxon>
        <taxon>Pseudomonadota</taxon>
        <taxon>Alphaproteobacteria</taxon>
        <taxon>Acetobacterales</taxon>
        <taxon>Acetobacteraceae</taxon>
        <taxon>Granulibacter</taxon>
    </lineage>
</organism>
<reference key="1">
    <citation type="journal article" date="2007" name="J. Bacteriol.">
        <title>Genome sequence analysis of the emerging human pathogenic acetic acid bacterium Granulibacter bethesdensis.</title>
        <authorList>
            <person name="Greenberg D.E."/>
            <person name="Porcella S.F."/>
            <person name="Zelazny A.M."/>
            <person name="Virtaneva K."/>
            <person name="Sturdevant D.E."/>
            <person name="Kupko J.J. III"/>
            <person name="Barbian K.D."/>
            <person name="Babar A."/>
            <person name="Dorward D.W."/>
            <person name="Holland S.M."/>
        </authorList>
    </citation>
    <scope>NUCLEOTIDE SEQUENCE [LARGE SCALE GENOMIC DNA]</scope>
    <source>
        <strain>ATCC BAA-1260 / CGDNIH1</strain>
    </source>
</reference>